<keyword id="KW-0167">Capsid protein</keyword>
<keyword id="KW-1165">Clathrin-mediated endocytosis of virus by host</keyword>
<keyword id="KW-0165">Cleavage on pair of basic residues</keyword>
<keyword id="KW-1015">Disulfide bond</keyword>
<keyword id="KW-1262">Eukaryotic host gene expression shutoff by virus</keyword>
<keyword id="KW-1191">Eukaryotic host transcription shutoff by virus</keyword>
<keyword id="KW-1170">Fusion of virus membrane with host endosomal membrane</keyword>
<keyword id="KW-1168">Fusion of virus membrane with host membrane</keyword>
<keyword id="KW-0325">Glycoprotein</keyword>
<keyword id="KW-1032">Host cell membrane</keyword>
<keyword id="KW-1035">Host cytoplasm</keyword>
<keyword id="KW-1038">Host endoplasmic reticulum</keyword>
<keyword id="KW-1190">Host gene expression shutoff by virus</keyword>
<keyword id="KW-1040">Host Golgi apparatus</keyword>
<keyword id="KW-1043">Host membrane</keyword>
<keyword id="KW-1048">Host nucleus</keyword>
<keyword id="KW-0945">Host-virus interaction</keyword>
<keyword id="KW-0378">Hydrolase</keyword>
<keyword id="KW-0407">Ion channel</keyword>
<keyword id="KW-0406">Ion transport</keyword>
<keyword id="KW-0449">Lipoprotein</keyword>
<keyword id="KW-0472">Membrane</keyword>
<keyword id="KW-0564">Palmitate</keyword>
<keyword id="KW-0597">Phosphoprotein</keyword>
<keyword id="KW-0645">Protease</keyword>
<keyword id="KW-0694">RNA-binding</keyword>
<keyword id="KW-0720">Serine protease</keyword>
<keyword id="KW-1144">T=4 icosahedral capsid protein</keyword>
<keyword id="KW-0812">Transmembrane</keyword>
<keyword id="KW-1133">Transmembrane helix</keyword>
<keyword id="KW-0813">Transport</keyword>
<keyword id="KW-1161">Viral attachment to host cell</keyword>
<keyword id="KW-1234">Viral attachment to host entry receptor</keyword>
<keyword id="KW-0261">Viral envelope protein</keyword>
<keyword id="KW-1182">Viral ion channel</keyword>
<keyword id="KW-1162">Viral penetration into host cytoplasm</keyword>
<keyword id="KW-0946">Virion</keyword>
<keyword id="KW-1164">Virus endocytosis by host</keyword>
<keyword id="KW-1160">Virus entry into host cell</keyword>
<comment type="function">
    <molecule>Capsid protein</molecule>
    <text evidence="2 3 5 7 8">Forms an icosahedral capsid with a T=4 symmetry composed of 240 copies of the capsid protein surrounded by a lipid membrane through which penetrate 80 spikes composed of trimers of E1-E2 heterodimers (By similarity). The capsid protein binds to the viral RNA genome at a site adjacent to a ribosome binding site for viral genome translation following genome release (By similarity). Possesses a protease activity that results in its autocatalytic cleavage from the nascent structural protein (By similarity). Following its self-cleavage, the capsid protein transiently associates with ribosomes, and within several minutes the protein binds to viral RNA and rapidly assembles into icosahedric core particles (By similarity). The resulting nucleocapsid eventually associates with the cytoplasmic domain of the spike glycoprotein E2 at the cell membrane, leading to budding and formation of mature virions (By similarity). In case of infection, new virions attach to target cells and after clathrin-mediated endocytosis their membrane fuses with the host endosomal membrane (By similarity). This leads to the release of the nucleocapsid into the cytoplasm, followed by an uncoating event necessary for the genomic RNA to become accessible (By similarity). The uncoating might be triggered by the interaction of capsid proteins with ribosomes (By similarity). Binding of ribosomes would release the genomic RNA since the same region is genomic RNA-binding and ribosome-binding (By similarity). Specifically inhibits interleukin-1 receptor-associated kinase 1/IRAK1-dependent signaling during viral entry, representing a means by which the alphaviruses may evade innate immune detection and activation prior to viral gene expression (By similarity). Inhibits host transcription (By similarity). Forms a tetrameric complex with XPO1/CRM1 and the nuclear import receptor importin (By similarity). This complex blocks the central channel of host nuclear pores thereby inhibiting the receptor-mediated nuclear transport and thus the host mRNA and rRNA transcription (By similarity). The inhibition of transcription is linked to a cytopathic effect on the host cell (By similarity).</text>
</comment>
<comment type="function">
    <molecule>Assembly protein E3</molecule>
    <text evidence="2">Provides the signal sequence for the translocation of the precursor of protein E3/E2 to the host endoplasmic reticulum. Furin-cleaved E3 remains associated with spike glycoprotein E1 and mediates pH protection of the latter during the transport via the secretory pathway. After virion release from the host cell, the assembly protein E3 is gradually released in the extracellular space.</text>
</comment>
<comment type="function">
    <molecule>Spike glycoprotein E2</molecule>
    <text evidence="2 5">Plays a role in viral attachment to target host cell, by binding to the cell receptor LDLRAD3 (By similarity). Synthesized as a p62 precursor which is processed by furin at the cell membrane just before virion budding, giving rise to E2-E1 heterodimer. The p62-E1 heterodimer is stable, whereas E2-E1 is unstable and dissociate at low pH. p62 is processed at the last step, presumably to avoid E1 fusion activation before its final export to cell surface. E2 C-terminus contains a transitory transmembrane that would be disrupted by palmitoylation, resulting in reorientation of the C-terminal tail from lumenal to cytoplasmic side. This step is critical since E2 C-terminus is involved in budding by interacting with capsid proteins. This release of E2 C-terminus in cytoplasm occurs lately in protein export, and precludes premature assembly of particles at the endoplasmic reticulum membrane.</text>
</comment>
<comment type="function">
    <molecule>6K protein</molecule>
    <text evidence="2 3">Acts as a viroporin that participates in virus glycoprotein processing and transport to the plasma membrane, cell permeabilization and budding of viral particles (By similarity). Disrupts the calcium homeostasis of the cell, probably at the endoplasmic reticulum level (By similarity). This leads to cytoplasmic calcium elevation (By similarity). Because of its lipophilic properties, the 6K protein is postulated to influence the selection of lipids that interact with the transmembrane domains of the glycoproteins, which, in turn, affects the deformability of the bilayer required for the extreme curvature that occurs as budding proceeds. Present in low amount in virions, about 3% compared to viral glycoproteins (By similarity).</text>
</comment>
<comment type="function">
    <molecule>Spike glycoprotein E1</molecule>
    <text evidence="3 5">Class II viral fusion protein. Fusion activity is inactive as long as E1 is bound to E2 in mature virion. After virus attachment to cell receptor LDLRAD3 and endocytosis, acidification of the endosome induce dissociation of E1/E2 heterodimer and concomitant trimerization of the E1 subunits (By similarity). This E1 trimer is fusion active, and promotes release of viral nucleocapsid in cytoplasm after endosome and viral membrane fusion. Efficient fusion requires the presence of cholesterol and sphingolipid in the target membrane (By similarity).</text>
</comment>
<comment type="catalytic activity">
    <reaction evidence="3">
        <text>Autocatalytic release of the core protein from the N-terminus of the togavirus structural polyprotein by hydrolysis of a -Trp-|-Ser- bond.</text>
        <dbReference type="EC" id="3.4.21.90"/>
    </reaction>
</comment>
<comment type="subunit">
    <molecule>Capsid protein</molecule>
    <text evidence="3 5 11 12">Homodimer (By similarity). Homomultimer (By similarity). Interacts with host karyopherin KPNA4; this interaction allows the nuclear import of the viral capsid protein (By similarity). Interacts with spike glycoprotein E2 (By similarity). Interacts with host IRAK1; the interaction leads to inhibition of IRAK1-dependent signaling (By similarity). Part of a tetrameric complex composed of host CRM1, host importin alpha/beta dimer and the viral capsid; this complex blocks the receptor-mediated transport through the nuclear pore (By similarity). Interacts with host phosphatase PPP1CA; this interaction dephosphorylates the capsid protein, which increases its ability to bind to the viral genome (By similarity).</text>
</comment>
<comment type="subunit">
    <molecule>Precursor of protein E3/E2</molecule>
    <text evidence="2 3 5">The precursor of protein E3/E2 and E1 form a heterodimer shortly after synthesis (By similarity).</text>
</comment>
<comment type="subunit">
    <molecule>Spike glycoprotein E1</molecule>
    <text evidence="3 5 12">Interacts with spike glycoprotein E2 (By similarity). The precursor of protein E3/E2 and E1 form a heterodimer shortly after synthesis (By similarity). Processing of the precursor of protein E3/E2 into E2 and E3 results in a heterodimer of the spike glycoproteins E2 and E1 (By similarity). Spike at virion surface are constituted of three E2-E1 heterodimers (By similarity). After target cell attachment and endocytosis, E1 change conformation to form homotrimers (By similarity). Interacts with 6K protein (By similarity). Interacts with host LDLRAD3; this interaction mediates viral entry to the host cell (By similarity).</text>
</comment>
<comment type="subunit">
    <molecule>Spike glycoprotein E2</molecule>
    <text evidence="3 5">Interacts with spike glycoprotein E1 (By similarity). Processing of the precursor of protein E3/E2 into E2 and E3 results in a heterodimer of the spike glycoproteins E2 and E1 (By similarity). Spike at virion surface are constituted of a trimer of E2-E1 heterodimers (By similarity). Interacts with 6K protein (By similarity). Interacts with host LDLRAD3; this interaction mediates viral entry to the host cell (By similarity).</text>
</comment>
<comment type="subunit">
    <molecule>6K protein</molecule>
    <text evidence="3 9">Oligomer (By similarity). Interacts with spike glycoprotein E1. Interacts with spike glycoprotein E2 (By similarity).</text>
</comment>
<comment type="subcellular location">
    <molecule>Capsid protein</molecule>
    <subcellularLocation>
        <location evidence="3">Virion</location>
    </subcellularLocation>
    <subcellularLocation>
        <location evidence="5">Host cytoplasm</location>
    </subcellularLocation>
    <subcellularLocation>
        <location evidence="3">Host cell membrane</location>
    </subcellularLocation>
    <subcellularLocation>
        <location evidence="5">Host nucleus</location>
    </subcellularLocation>
</comment>
<comment type="subcellular location">
    <molecule>Spike glycoprotein E2</molecule>
    <subcellularLocation>
        <location evidence="12">Virion membrane</location>
        <topology evidence="13">Single-pass type I membrane protein</topology>
    </subcellularLocation>
    <subcellularLocation>
        <location evidence="3">Host cell membrane</location>
        <topology evidence="12">Single-pass type I membrane protein</topology>
    </subcellularLocation>
</comment>
<comment type="subcellular location">
    <molecule>6K protein</molecule>
    <subcellularLocation>
        <location evidence="3">Host cell membrane</location>
        <topology evidence="13">Multi-pass membrane protein</topology>
    </subcellularLocation>
    <subcellularLocation>
        <location evidence="3">Virion membrane</location>
        <topology evidence="13">Multi-pass membrane protein</topology>
    </subcellularLocation>
    <subcellularLocation>
        <location evidence="3">Host Golgi apparatus</location>
    </subcellularLocation>
    <subcellularLocation>
        <location>Host Golgi apparatus</location>
        <location>Host trans-Golgi network</location>
    </subcellularLocation>
    <subcellularLocation>
        <location evidence="3">Host endoplasmic reticulum</location>
    </subcellularLocation>
</comment>
<comment type="subcellular location">
    <molecule>Spike glycoprotein E1</molecule>
    <subcellularLocation>
        <location evidence="12">Virion membrane</location>
        <topology evidence="13">Single-pass type I membrane protein</topology>
    </subcellularLocation>
    <subcellularLocation>
        <location evidence="3 12">Host cell membrane</location>
        <topology evidence="13">Single-pass type I membrane protein</topology>
    </subcellularLocation>
</comment>
<comment type="domain">
    <text evidence="2">Structural polyprotein: As soon as the capsid protein has been autocleaved, an internal uncleaved signal peptide directs the remaining polyprotein to the endoplasmic reticulum.</text>
</comment>
<comment type="domain">
    <molecule>Capsid protein</molecule>
    <text evidence="3 5">The very N-terminus plays a role in the particle assembly process (By similarity). The N-terminus also contains a nuclear localization signal and a supraphysiological nuclear export signal (supraNES), which is an unusually strong NES that mediates host CRM1 binding in the absence of RanGTP and thus can bind CRM1, not only in the nucleus, but also in the cytoplasm (By similarity). The C-terminus functions as a protease during translation to cleave itself from the translating structural polyprotein (By similarity).</text>
</comment>
<comment type="PTM">
    <text evidence="2">Structural polyprotein: Specific enzymatic cleavages in vivo yield mature proteins. Capsid protein is auto-cleaved during polyprotein translation, unmasking a signal peptide at the N-terminus of the precursor of E3/E2. The remaining polyprotein is then targeted to the host endoplasmic reticulum, where host signal peptidase cleaves it into pE2, 6K and E1 proteins. pE2 is further processed to mature E3 and E2 by host furin in trans-Golgi vesicle.</text>
</comment>
<comment type="PTM">
    <molecule>Capsid protein</molecule>
    <text evidence="5">Phosphorylated on serine and threonine residues.</text>
</comment>
<comment type="PTM">
    <molecule>Spike glycoprotein E2</molecule>
    <text evidence="2">Palmitoylated via thioester bonds. These palmitoylations may induce disruption of the C-terminus transmembrane. This would result in the reorientation of E2 C-terminus from lumenal to cytoplasmic side.</text>
</comment>
<comment type="PTM">
    <molecule>Spike glycoprotein E1</molecule>
    <text evidence="2">N-glycosylated.</text>
</comment>
<comment type="PTM">
    <molecule>Spike glycoprotein E2</molecule>
    <text evidence="2">N-glycosylated.</text>
</comment>
<comment type="PTM">
    <molecule>Assembly protein E3</molecule>
    <text evidence="2">N-glycosylated.</text>
</comment>
<comment type="PTM">
    <molecule>6K protein</molecule>
    <text evidence="2">Palmitoylated via thioester bonds.</text>
</comment>
<comment type="miscellaneous">
    <text evidence="16">Belongs to the New World alphaviruses that can cause fatal encephalitis.</text>
</comment>
<comment type="miscellaneous">
    <text evidence="11">Structural polyprotein: Translated from a subgenomic RNA synthesized during togavirus replication.</text>
</comment>
<comment type="sequence caution" evidence="16">
    <conflict type="erroneous translation">
        <sequence resource="EMBL-CDS" id="AAA42983"/>
    </conflict>
    <text>Erroneous CDS prediction.</text>
</comment>
<comment type="sequence caution" evidence="16">
    <conflict type="erroneous translation">
        <sequence resource="EMBL-CDS" id="AAA42985"/>
    </conflict>
    <text>Erroneous CDS prediction.</text>
</comment>
<comment type="sequence caution" evidence="16">
    <conflict type="erroneous translation">
        <sequence resource="EMBL-CDS" id="AAA42986"/>
    </conflict>
    <text>Erroneous CDS prediction.</text>
</comment>
<comment type="sequence caution" evidence="16">
    <conflict type="erroneous translation">
        <sequence resource="EMBL-CDS" id="AAA42987"/>
    </conflict>
    <text>Erroneous CDS prediction.</text>
</comment>
<comment type="sequence caution" evidence="16">
    <conflict type="erroneous translation">
        <sequence resource="EMBL-CDS" id="AAA42988"/>
    </conflict>
    <text>Erroneous CDS prediction.</text>
</comment>
<protein>
    <recommendedName>
        <fullName>Structural polyprotein</fullName>
    </recommendedName>
    <alternativeName>
        <fullName>p130</fullName>
    </alternativeName>
    <component>
        <recommendedName>
            <fullName>Capsid protein</fullName>
            <ecNumber evidence="2">3.4.21.90</ecNumber>
        </recommendedName>
        <alternativeName>
            <fullName>Coat protein</fullName>
            <shortName>C</shortName>
        </alternativeName>
    </component>
    <component>
        <recommendedName>
            <fullName>Precursor of protein E3/E2</fullName>
        </recommendedName>
        <alternativeName>
            <fullName>p62</fullName>
        </alternativeName>
        <alternativeName>
            <fullName>pE2</fullName>
        </alternativeName>
    </component>
    <component>
        <recommendedName>
            <fullName>Assembly protein E3</fullName>
        </recommendedName>
    </component>
    <component>
        <recommendedName>
            <fullName>Spike glycoprotein E2</fullName>
        </recommendedName>
        <alternativeName>
            <fullName>E2 envelope glycoprotein</fullName>
        </alternativeName>
    </component>
    <component>
        <recommendedName>
            <fullName>6K protein</fullName>
        </recommendedName>
    </component>
    <component>
        <recommendedName>
            <fullName>Spike glycoprotein E1</fullName>
        </recommendedName>
        <alternativeName>
            <fullName>E1 envelope glycoprotein</fullName>
        </alternativeName>
    </component>
</protein>
<organism>
    <name type="scientific">Venezuelan equine encephalitis virus (strain Everglades Fe3-7c)</name>
    <name type="common">VEEV</name>
    <dbReference type="NCBI Taxonomy" id="36383"/>
    <lineage>
        <taxon>Viruses</taxon>
        <taxon>Riboviria</taxon>
        <taxon>Orthornavirae</taxon>
        <taxon>Kitrinoviricota</taxon>
        <taxon>Alsuviricetes</taxon>
        <taxon>Martellivirales</taxon>
        <taxon>Togaviridae</taxon>
        <taxon>Alphavirus</taxon>
        <taxon>Venezuelan equine encephalitis virus</taxon>
    </lineage>
</organism>
<sequence length="1254" mass="138338">MFPFQPMYPMQPMPYRNPFAAPRRPWFPRTDPFLAMQVQELTRSMANLTFKQRRGAPPEGPPAKKSKREAPQKQRGGQRKKKKNEGKKKAKTGPPNLKTQNGNKKKTNKKPGKRQRMVMKLESDKTFPIMLEGKINGYACVVGGKLFRPMHVEGKIDNDVLAALKTKKASKYDLEYADVPQNMRADTFKYTHEKPQGYYSWHHGAVQYENGRFTVPRGVGARGDSGRPILDNQGRVVAIVLGGVNEGSRTALSVVMWNEKGVTVKYTPENCEQWSLVTTMCLLANVTFPCAQPPICYDRKPAETLAMLSANVDNPGYDELLKAAVTCPGRKRRSTEELFKEYKLTRPYMARCVRCAVGSCHSPIAIEAVKSDGHDGYVRLQTSSQYGLDPSGNLKSRTMRYNMYGTIEEIPLHQVSLHTSRPCHIVDGHGYFLLARCPAGDSITMEFKKDSVTHSCSVPYEVKFNPVGRELYTHPPEHGAEQACQVYAHDAQNRGAYVEMHLPGSEVDSSLVSLSSGLVSVTPPAGTSALVECECSGTTISKTINKTKQFSQCTKKEQCRAYRLQNDKWVYNSDKLPKAAGATLKGKLHVPFLLADGKCTVPLAPEPMITFGFRSVSLKLHPKYPTYLTTRELADEPHYTHELISEPSVRNFSVTAKGWEFVWGNHPPKRFWAQETAPGNPHGLPHEVIVHYYHRYPMSTITGLSICAAIVAVSIAASTWLLCRSRASCLTPYRLTPNAKMPLCLAVLCCARSARAETTWESLDHLWNNNQQMFWTQLLIPLAALIVVTRLLKCMCCVVPFLVVAGAAGAGAYEHATTMPNQAGISYNTIVNRAGYAPLPISITPTKIKLIPTVNLEYVTCHYKTGMDSPTIKCCGSQECTPTYRPDEQCKVFAGVYPFMWGGAYCFCDTENTQISKAYVMKSEDCLADHAAAYKAHTASVQALLNITVGEHSTVTTVYVNGETPVNFNGVKLTAGPLSTAWTPFDRKIVQYAGEIYNYDFPEYGAGQPGAFGDIQLRTVSSSDLYANTNLVLQRPKAGAIHVPYTQAPSGFEQWKKDKAPSLKFTAPFGCEIYTNPIRAENCAVGSIPLAFDIPDALFTRVSETPTLSAAECTLNECVYSSDFGGIATVKYSASKSGKCAVHVPSGTATLKEASVELAEQGSVTIHFSTANIHPEFRLQICTSFVTCKGDCHPPKDHIVTHPQYHAQTFTAAVSKTAWTWLTSLLGGSAVIIIIGLVLATLVAMYVLTNQKHN</sequence>
<dbReference type="EC" id="3.4.21.90" evidence="2"/>
<dbReference type="EMBL" id="L04598">
    <property type="protein sequence ID" value="AAA42983.1"/>
    <property type="status" value="ALT_SEQ"/>
    <property type="molecule type" value="mRNA"/>
</dbReference>
<dbReference type="EMBL" id="L04598">
    <property type="protein sequence ID" value="AAA42984.1"/>
    <property type="molecule type" value="mRNA"/>
</dbReference>
<dbReference type="EMBL" id="L04598">
    <property type="protein sequence ID" value="AAA42985.1"/>
    <property type="status" value="ALT_SEQ"/>
    <property type="molecule type" value="mRNA"/>
</dbReference>
<dbReference type="EMBL" id="L04598">
    <property type="protein sequence ID" value="AAA42986.1"/>
    <property type="status" value="ALT_SEQ"/>
    <property type="molecule type" value="mRNA"/>
</dbReference>
<dbReference type="EMBL" id="L04598">
    <property type="protein sequence ID" value="AAA42987.1"/>
    <property type="status" value="ALT_SEQ"/>
    <property type="molecule type" value="mRNA"/>
</dbReference>
<dbReference type="EMBL" id="L04598">
    <property type="protein sequence ID" value="AAA42988.1"/>
    <property type="status" value="ALT_SEQ"/>
    <property type="molecule type" value="mRNA"/>
</dbReference>
<dbReference type="PIR" id="JQ1978">
    <property type="entry name" value="JQ1978"/>
</dbReference>
<dbReference type="SMR" id="P36330"/>
<dbReference type="MEROPS" id="S03.001"/>
<dbReference type="GO" id="GO:0030430">
    <property type="term" value="C:host cell cytoplasm"/>
    <property type="evidence" value="ECO:0007669"/>
    <property type="project" value="UniProtKB-SubCell"/>
</dbReference>
<dbReference type="GO" id="GO:0042025">
    <property type="term" value="C:host cell nucleus"/>
    <property type="evidence" value="ECO:0007669"/>
    <property type="project" value="UniProtKB-SubCell"/>
</dbReference>
<dbReference type="GO" id="GO:0020002">
    <property type="term" value="C:host cell plasma membrane"/>
    <property type="evidence" value="ECO:0007669"/>
    <property type="project" value="UniProtKB-SubCell"/>
</dbReference>
<dbReference type="GO" id="GO:0016020">
    <property type="term" value="C:membrane"/>
    <property type="evidence" value="ECO:0007669"/>
    <property type="project" value="UniProtKB-KW"/>
</dbReference>
<dbReference type="GO" id="GO:0039619">
    <property type="term" value="C:T=4 icosahedral viral capsid"/>
    <property type="evidence" value="ECO:0007669"/>
    <property type="project" value="UniProtKB-KW"/>
</dbReference>
<dbReference type="GO" id="GO:0019031">
    <property type="term" value="C:viral envelope"/>
    <property type="evidence" value="ECO:0007669"/>
    <property type="project" value="UniProtKB-KW"/>
</dbReference>
<dbReference type="GO" id="GO:0055036">
    <property type="term" value="C:virion membrane"/>
    <property type="evidence" value="ECO:0007669"/>
    <property type="project" value="UniProtKB-SubCell"/>
</dbReference>
<dbReference type="GO" id="GO:0003723">
    <property type="term" value="F:RNA binding"/>
    <property type="evidence" value="ECO:0007669"/>
    <property type="project" value="UniProtKB-KW"/>
</dbReference>
<dbReference type="GO" id="GO:0004252">
    <property type="term" value="F:serine-type endopeptidase activity"/>
    <property type="evidence" value="ECO:0007669"/>
    <property type="project" value="InterPro"/>
</dbReference>
<dbReference type="GO" id="GO:0005198">
    <property type="term" value="F:structural molecule activity"/>
    <property type="evidence" value="ECO:0007669"/>
    <property type="project" value="InterPro"/>
</dbReference>
<dbReference type="GO" id="GO:0075512">
    <property type="term" value="P:clathrin-dependent endocytosis of virus by host cell"/>
    <property type="evidence" value="ECO:0007669"/>
    <property type="project" value="UniProtKB-KW"/>
</dbReference>
<dbReference type="GO" id="GO:0039654">
    <property type="term" value="P:fusion of virus membrane with host endosome membrane"/>
    <property type="evidence" value="ECO:0007669"/>
    <property type="project" value="UniProtKB-KW"/>
</dbReference>
<dbReference type="GO" id="GO:0006508">
    <property type="term" value="P:proteolysis"/>
    <property type="evidence" value="ECO:0007669"/>
    <property type="project" value="UniProtKB-KW"/>
</dbReference>
<dbReference type="GO" id="GO:0039657">
    <property type="term" value="P:symbiont-mediated suppression of host gene expression"/>
    <property type="evidence" value="ECO:0007669"/>
    <property type="project" value="UniProtKB-KW"/>
</dbReference>
<dbReference type="GO" id="GO:0039722">
    <property type="term" value="P:symbiont-mediated suppression of host toll-like receptor signaling pathway"/>
    <property type="evidence" value="ECO:0000250"/>
    <property type="project" value="UniProtKB"/>
</dbReference>
<dbReference type="GO" id="GO:0019062">
    <property type="term" value="P:virion attachment to host cell"/>
    <property type="evidence" value="ECO:0007669"/>
    <property type="project" value="UniProtKB-KW"/>
</dbReference>
<dbReference type="FunFam" id="1.10.287.2230:FF:000001">
    <property type="entry name" value="Structural polyprotein"/>
    <property type="match status" value="1"/>
</dbReference>
<dbReference type="FunFam" id="2.40.10.10:FF:000075">
    <property type="entry name" value="Structural polyprotein"/>
    <property type="match status" value="1"/>
</dbReference>
<dbReference type="FunFam" id="2.40.10.10:FF:000076">
    <property type="entry name" value="Structural polyprotein"/>
    <property type="match status" value="1"/>
</dbReference>
<dbReference type="FunFam" id="2.60.40.350:FF:000002">
    <property type="entry name" value="Structural polyprotein"/>
    <property type="match status" value="1"/>
</dbReference>
<dbReference type="FunFam" id="2.60.98.10:FF:000002">
    <property type="entry name" value="Structural polyprotein"/>
    <property type="match status" value="1"/>
</dbReference>
<dbReference type="FunFam" id="2.60.98.10:FF:000003">
    <property type="entry name" value="Structural polyprotein"/>
    <property type="match status" value="1"/>
</dbReference>
<dbReference type="Gene3D" id="1.10.287.2230">
    <property type="match status" value="1"/>
</dbReference>
<dbReference type="Gene3D" id="2.60.40.350">
    <property type="match status" value="1"/>
</dbReference>
<dbReference type="Gene3D" id="2.60.40.3200">
    <property type="entry name" value="Alphavirus E2 glycoprotein, A domain"/>
    <property type="match status" value="1"/>
</dbReference>
<dbReference type="Gene3D" id="2.60.40.4310">
    <property type="entry name" value="Alphavirus E2 glycoprotein, domain B"/>
    <property type="match status" value="1"/>
</dbReference>
<dbReference type="Gene3D" id="2.60.40.2400">
    <property type="entry name" value="Alphavirus E2 glycoprotein, domain C"/>
    <property type="match status" value="1"/>
</dbReference>
<dbReference type="Gene3D" id="2.60.98.10">
    <property type="entry name" value="Tick-borne Encephalitis virus Glycoprotein, domain 1"/>
    <property type="match status" value="3"/>
</dbReference>
<dbReference type="Gene3D" id="2.40.10.10">
    <property type="entry name" value="Trypsin-like serine proteases"/>
    <property type="match status" value="2"/>
</dbReference>
<dbReference type="InterPro" id="IPR002548">
    <property type="entry name" value="Alpha_E1_glycop"/>
</dbReference>
<dbReference type="InterPro" id="IPR000936">
    <property type="entry name" value="Alpha_E2_glycop"/>
</dbReference>
<dbReference type="InterPro" id="IPR002533">
    <property type="entry name" value="Alpha_E3_glycop"/>
</dbReference>
<dbReference type="InterPro" id="IPR042304">
    <property type="entry name" value="Alphavir_E2_A"/>
</dbReference>
<dbReference type="InterPro" id="IPR042305">
    <property type="entry name" value="Alphavir_E2_B"/>
</dbReference>
<dbReference type="InterPro" id="IPR042306">
    <property type="entry name" value="Alphavir_E2_C"/>
</dbReference>
<dbReference type="InterPro" id="IPR000336">
    <property type="entry name" value="Flavivir/Alphavir_Ig-like_sf"/>
</dbReference>
<dbReference type="InterPro" id="IPR036253">
    <property type="entry name" value="Glycoprot_cen/dimer_sf"/>
</dbReference>
<dbReference type="InterPro" id="IPR038055">
    <property type="entry name" value="Glycoprot_E_dimer_dom"/>
</dbReference>
<dbReference type="InterPro" id="IPR014756">
    <property type="entry name" value="Ig_E-set"/>
</dbReference>
<dbReference type="InterPro" id="IPR009003">
    <property type="entry name" value="Peptidase_S1_PA"/>
</dbReference>
<dbReference type="InterPro" id="IPR043504">
    <property type="entry name" value="Peptidase_S1_PA_chymotrypsin"/>
</dbReference>
<dbReference type="InterPro" id="IPR000930">
    <property type="entry name" value="Peptidase_S3"/>
</dbReference>
<dbReference type="Pfam" id="PF01589">
    <property type="entry name" value="Alpha_E1_glycop"/>
    <property type="match status" value="1"/>
</dbReference>
<dbReference type="Pfam" id="PF00943">
    <property type="entry name" value="Alpha_E2_glycop"/>
    <property type="match status" value="1"/>
</dbReference>
<dbReference type="Pfam" id="PF01563">
    <property type="entry name" value="Alpha_E3_glycop"/>
    <property type="match status" value="1"/>
</dbReference>
<dbReference type="Pfam" id="PF00944">
    <property type="entry name" value="Peptidase_S3"/>
    <property type="match status" value="1"/>
</dbReference>
<dbReference type="PRINTS" id="PR00798">
    <property type="entry name" value="TOGAVIRIN"/>
</dbReference>
<dbReference type="SUPFAM" id="SSF81296">
    <property type="entry name" value="E set domains"/>
    <property type="match status" value="1"/>
</dbReference>
<dbReference type="SUPFAM" id="SSF50494">
    <property type="entry name" value="Trypsin-like serine proteases"/>
    <property type="match status" value="1"/>
</dbReference>
<dbReference type="SUPFAM" id="SSF56983">
    <property type="entry name" value="Viral glycoprotein, central and dimerisation domains"/>
    <property type="match status" value="1"/>
</dbReference>
<dbReference type="PROSITE" id="PS51690">
    <property type="entry name" value="ALPHAVIRUS_CP"/>
    <property type="match status" value="1"/>
</dbReference>
<proteinExistence type="evidence at transcript level"/>
<reference key="1">
    <citation type="journal article" date="1993" name="J. Gen. Virol.">
        <title>Molecular evidence that epizootic Venezuelan equine encephalitis (VEE) I-AB viruses are not evolutionary derivatives of enzootic VEE subtype I-E or II viruses.</title>
        <authorList>
            <person name="Sneider J.M."/>
            <person name="Kinney R.M."/>
            <person name="Tsuchiya K.R."/>
            <person name="Trent D.W."/>
        </authorList>
    </citation>
    <scope>NUCLEOTIDE SEQUENCE [MRNA]</scope>
</reference>
<name>POLS_EEVVE</name>
<evidence type="ECO:0000250" key="1"/>
<evidence type="ECO:0000250" key="2">
    <source>
        <dbReference type="UniProtKB" id="P03315"/>
    </source>
</evidence>
<evidence type="ECO:0000250" key="3">
    <source>
        <dbReference type="UniProtKB" id="P03316"/>
    </source>
</evidence>
<evidence type="ECO:0000250" key="4">
    <source>
        <dbReference type="UniProtKB" id="P08768"/>
    </source>
</evidence>
<evidence type="ECO:0000250" key="5">
    <source>
        <dbReference type="UniProtKB" id="P09592"/>
    </source>
</evidence>
<evidence type="ECO:0000250" key="6">
    <source>
        <dbReference type="UniProtKB" id="P13897"/>
    </source>
</evidence>
<evidence type="ECO:0000250" key="7">
    <source>
        <dbReference type="UniProtKB" id="P27284"/>
    </source>
</evidence>
<evidence type="ECO:0000250" key="8">
    <source>
        <dbReference type="UniProtKB" id="P36329"/>
    </source>
</evidence>
<evidence type="ECO:0000250" key="9">
    <source>
        <dbReference type="UniProtKB" id="Q5XXP3"/>
    </source>
</evidence>
<evidence type="ECO:0000250" key="10">
    <source>
        <dbReference type="UniProtKB" id="Q5Y388"/>
    </source>
</evidence>
<evidence type="ECO:0000250" key="11">
    <source>
        <dbReference type="UniProtKB" id="Q86925"/>
    </source>
</evidence>
<evidence type="ECO:0000250" key="12">
    <source>
        <dbReference type="UniProtKB" id="Q8JUX5"/>
    </source>
</evidence>
<evidence type="ECO:0000255" key="13"/>
<evidence type="ECO:0000255" key="14">
    <source>
        <dbReference type="PROSITE-ProRule" id="PRU01027"/>
    </source>
</evidence>
<evidence type="ECO:0000256" key="15">
    <source>
        <dbReference type="SAM" id="MobiDB-lite"/>
    </source>
</evidence>
<evidence type="ECO:0000305" key="16"/>
<accession>P36330</accession>
<accession>Q66582</accession>
<accession>Q66583</accession>
<accession>Q66584</accession>
<accession>Q66585</accession>
<accession>Q66586</accession>
<feature type="chain" id="PRO_0000041261" description="Capsid protein">
    <location>
        <begin position="1"/>
        <end position="274"/>
    </location>
</feature>
<feature type="chain" id="PRO_0000234320" description="Precursor of protein E3/E2">
    <location>
        <begin position="275"/>
        <end position="756"/>
    </location>
</feature>
<feature type="chain" id="PRO_0000041262" description="Assembly protein E3">
    <location>
        <begin position="275"/>
        <end position="333"/>
    </location>
</feature>
<feature type="chain" id="PRO_0000041263" description="Spike glycoprotein E2">
    <location>
        <begin position="334"/>
        <end position="756"/>
    </location>
</feature>
<feature type="chain" id="PRO_0000041264" description="6K protein">
    <location>
        <begin position="757"/>
        <end position="812"/>
    </location>
</feature>
<feature type="chain" id="PRO_0000041265" description="Spike glycoprotein E1">
    <location>
        <begin position="813"/>
        <end position="1254"/>
    </location>
</feature>
<feature type="topological domain" description="Extracellular" evidence="13">
    <location>
        <begin position="275"/>
        <end position="702"/>
    </location>
</feature>
<feature type="transmembrane region" description="Helical" evidence="13">
    <location>
        <begin position="703"/>
        <end position="723"/>
    </location>
</feature>
<feature type="topological domain" description="Cytoplasmic" evidence="13">
    <location>
        <begin position="724"/>
        <end position="756"/>
    </location>
</feature>
<feature type="topological domain" description="Extracellular" evidence="13">
    <location>
        <begin position="757"/>
        <end position="768"/>
    </location>
</feature>
<feature type="transmembrane region" description="Helical" evidence="13">
    <location>
        <begin position="769"/>
        <end position="789"/>
    </location>
</feature>
<feature type="topological domain" description="Cytoplasmic" evidence="13">
    <location>
        <position position="790"/>
    </location>
</feature>
<feature type="transmembrane region" description="Helical" evidence="13">
    <location>
        <begin position="791"/>
        <end position="811"/>
    </location>
</feature>
<feature type="topological domain" description="Extracellular" evidence="13">
    <location>
        <begin position="812"/>
        <end position="1224"/>
    </location>
</feature>
<feature type="transmembrane region" description="Helical" evidence="13">
    <location>
        <begin position="1225"/>
        <end position="1245"/>
    </location>
</feature>
<feature type="topological domain" description="Cytoplasmic" evidence="13">
    <location>
        <begin position="1246"/>
        <end position="1254"/>
    </location>
</feature>
<feature type="domain" description="Peptidase S3" evidence="14">
    <location>
        <begin position="125"/>
        <end position="274"/>
    </location>
</feature>
<feature type="region of interest" description="Necessary for nucleocapsid assembly and virus assembly" evidence="5">
    <location>
        <begin position="1"/>
        <end position="33"/>
    </location>
</feature>
<feature type="region of interest" description="Host transcription inhibition" evidence="5">
    <location>
        <begin position="33"/>
        <end position="68"/>
    </location>
</feature>
<feature type="region of interest" description="Disordered" evidence="15">
    <location>
        <begin position="48"/>
        <end position="118"/>
    </location>
</feature>
<feature type="region of interest" description="Binding to the viral RNA" evidence="7">
    <location>
        <begin position="90"/>
        <end position="126"/>
    </location>
</feature>
<feature type="region of interest" description="Ribosome-binding" evidence="7">
    <location>
        <begin position="111"/>
        <end position="125"/>
    </location>
</feature>
<feature type="region of interest" description="Interaction with spike glycoprotein E2" evidence="3">
    <location>
        <begin position="167"/>
        <end position="172"/>
    </location>
</feature>
<feature type="region of interest" description="Interaction with spike glycoprotein E2" evidence="3">
    <location>
        <begin position="259"/>
        <end position="263"/>
    </location>
</feature>
<feature type="region of interest" description="Functions as an uncleaved signal peptide for the precursor of protein E3/E2" evidence="2">
    <location>
        <begin position="275"/>
        <end position="286"/>
    </location>
</feature>
<feature type="region of interest" description="Interaction with the capsid protein" evidence="3">
    <location>
        <begin position="724"/>
        <end position="728"/>
    </location>
</feature>
<feature type="region of interest" description="Transient transmembrane before p62-6K protein processing" evidence="13">
    <location>
        <begin position="735"/>
        <end position="754"/>
    </location>
</feature>
<feature type="region of interest" description="E1 fusion peptide loop" evidence="12">
    <location>
        <begin position="896"/>
        <end position="913"/>
    </location>
</feature>
<feature type="short sequence motif" description="Supraphysiological nuclear export signal" evidence="5">
    <location>
        <begin position="41"/>
        <end position="48"/>
    </location>
</feature>
<feature type="short sequence motif" description="Nuclear localization signal" evidence="5">
    <location>
        <begin position="64"/>
        <end position="68"/>
    </location>
</feature>
<feature type="compositionally biased region" description="Basic residues" evidence="15">
    <location>
        <begin position="76"/>
        <end position="91"/>
    </location>
</feature>
<feature type="compositionally biased region" description="Basic residues" evidence="15">
    <location>
        <begin position="103"/>
        <end position="117"/>
    </location>
</feature>
<feature type="active site" description="Charge relay system" evidence="14">
    <location>
        <position position="151"/>
    </location>
</feature>
<feature type="active site" description="Charge relay system" evidence="14">
    <location>
        <position position="173"/>
    </location>
</feature>
<feature type="active site" description="Charge relay system" evidence="14">
    <location>
        <position position="225"/>
    </location>
</feature>
<feature type="site" description="Involved in dimerization of the capsid protein" evidence="11">
    <location>
        <position position="199"/>
    </location>
</feature>
<feature type="site" description="Involved in dimerization of the capsid protein" evidence="11">
    <location>
        <position position="232"/>
    </location>
</feature>
<feature type="site" description="Cleavage; by autolysis" evidence="2">
    <location>
        <begin position="274"/>
        <end position="275"/>
    </location>
</feature>
<feature type="site" description="Cleavage; by host furin" evidence="2">
    <location>
        <begin position="333"/>
        <end position="334"/>
    </location>
</feature>
<feature type="site" description="Cleavage; by host signal peptidase" evidence="2">
    <location>
        <begin position="756"/>
        <end position="757"/>
    </location>
</feature>
<feature type="site" description="Cleavage; by host signal peptidase" evidence="2">
    <location>
        <begin position="812"/>
        <end position="813"/>
    </location>
</feature>
<feature type="modified residue" description="Phosphothreonine" evidence="5">
    <location>
        <position position="92"/>
    </location>
</feature>
<feature type="modified residue" description="Phosphothreonine" evidence="5">
    <location>
        <position position="107"/>
    </location>
</feature>
<feature type="modified residue" description="Phosphoserine" evidence="5">
    <location>
        <position position="123"/>
    </location>
</feature>
<feature type="modified residue" description="Phosphothreonine" evidence="5">
    <location>
        <position position="126"/>
    </location>
</feature>
<feature type="lipid moiety-binding region" description="S-palmitoyl cysteine; by host" evidence="3">
    <location>
        <position position="729"/>
    </location>
</feature>
<feature type="lipid moiety-binding region" description="S-palmitoyl cysteine; by host" evidence="10">
    <location>
        <position position="749"/>
    </location>
</feature>
<feature type="lipid moiety-binding region" description="S-palmitoyl cysteine; by host" evidence="10">
    <location>
        <position position="750"/>
    </location>
</feature>
<feature type="glycosylation site" description="N-linked (GlcNAc...) asparagine; by host" evidence="13">
    <location>
        <position position="47"/>
    </location>
</feature>
<feature type="glycosylation site" description="N-linked (GlcNAc...) asparagine; by host" evidence="13">
    <location>
        <position position="285"/>
    </location>
</feature>
<feature type="glycosylation site" description="N-linked (GlcNAc...) asparagine; by host" evidence="13">
    <location>
        <position position="545"/>
    </location>
</feature>
<feature type="glycosylation site" description="N-linked (GlcNAc...) asparagine; by host" evidence="13">
    <location>
        <position position="651"/>
    </location>
</feature>
<feature type="glycosylation site" description="N-linked (GlcNAc...) asparagine; by host" evidence="13">
    <location>
        <position position="946"/>
    </location>
</feature>
<feature type="glycosylation site" description="N-linked (GlcNAc...) asparagine; by host" evidence="10">
    <location>
        <position position="1082"/>
    </location>
</feature>
<feature type="disulfide bond" evidence="4">
    <location>
        <begin position="281"/>
        <end position="290"/>
    </location>
</feature>
<feature type="disulfide bond" evidence="6">
    <location>
        <begin position="352"/>
        <end position="456"/>
    </location>
</feature>
<feature type="disulfide bond" evidence="6">
    <location>
        <begin position="355"/>
        <end position="360"/>
    </location>
</feature>
<feature type="disulfide bond" evidence="6">
    <location>
        <begin position="423"/>
        <end position="437"/>
    </location>
</feature>
<feature type="disulfide bond" evidence="6">
    <location>
        <begin position="484"/>
        <end position="599"/>
    </location>
</feature>
<feature type="disulfide bond" evidence="6">
    <location>
        <begin position="533"/>
        <end position="559"/>
    </location>
</feature>
<feature type="disulfide bond" evidence="6">
    <location>
        <begin position="535"/>
        <end position="553"/>
    </location>
</feature>
<feature type="disulfide bond" evidence="9">
    <location>
        <begin position="729"/>
        <end position="750"/>
    </location>
</feature>
<feature type="disulfide bond" evidence="6">
    <location>
        <begin position="861"/>
        <end position="926"/>
    </location>
</feature>
<feature type="disulfide bond" evidence="6">
    <location>
        <begin position="874"/>
        <end position="906"/>
    </location>
</feature>
<feature type="disulfide bond" evidence="6">
    <location>
        <begin position="875"/>
        <end position="908"/>
    </location>
</feature>
<feature type="disulfide bond" evidence="6">
    <location>
        <begin position="880"/>
        <end position="890"/>
    </location>
</feature>
<feature type="disulfide bond" evidence="6">
    <location>
        <begin position="1071"/>
        <end position="1083"/>
    </location>
</feature>
<feature type="disulfide bond" evidence="6">
    <location>
        <begin position="1113"/>
        <end position="1188"/>
    </location>
</feature>
<feature type="disulfide bond" evidence="6">
    <location>
        <begin position="1118"/>
        <end position="1192"/>
    </location>
</feature>
<feature type="disulfide bond" evidence="1">
    <location>
        <begin position="1140"/>
        <end position="1182"/>
    </location>
</feature>
<organismHost>
    <name type="scientific">Bos taurus</name>
    <name type="common">Bovine</name>
    <dbReference type="NCBI Taxonomy" id="9913"/>
</organismHost>
<organismHost>
    <name type="scientific">Didelphis marsupialis</name>
    <name type="common">Southern opossum</name>
    <dbReference type="NCBI Taxonomy" id="9268"/>
</organismHost>
<organismHost>
    <name type="scientific">Equus asinus</name>
    <name type="common">Donkey</name>
    <name type="synonym">Equus africanus asinus</name>
    <dbReference type="NCBI Taxonomy" id="9793"/>
</organismHost>
<organismHost>
    <name type="scientific">Equus caballus</name>
    <name type="common">Horse</name>
    <dbReference type="NCBI Taxonomy" id="9796"/>
</organismHost>
<organismHost>
    <name type="scientific">Homo sapiens</name>
    <name type="common">Human</name>
    <dbReference type="NCBI Taxonomy" id="9606"/>
</organismHost>
<organismHost>
    <name type="scientific">Melanoconion</name>
    <dbReference type="NCBI Taxonomy" id="53535"/>
</organismHost>
<organismHost>
    <name type="scientific">Philander opossum</name>
    <name type="common">Gray four-eyed opossum</name>
    <dbReference type="NCBI Taxonomy" id="9272"/>
</organismHost>
<organismHost>
    <name type="scientific">Proechimys</name>
    <dbReference type="NCBI Taxonomy" id="10162"/>
</organismHost>
<organismHost>
    <name type="scientific">Sigmodon hispidus</name>
    <name type="common">Hispid cotton rat</name>
    <dbReference type="NCBI Taxonomy" id="42415"/>
</organismHost>